<keyword id="KW-0028">Amino-acid biosynthesis</keyword>
<keyword id="KW-0963">Cytoplasm</keyword>
<keyword id="KW-0521">NADP</keyword>
<keyword id="KW-0560">Oxidoreductase</keyword>
<keyword id="KW-0641">Proline biosynthesis</keyword>
<keyword id="KW-1185">Reference proteome</keyword>
<accession>Q7VBM1</accession>
<comment type="function">
    <text evidence="1">Catalyzes the NADPH-dependent reduction of L-glutamate 5-phosphate into L-glutamate 5-semialdehyde and phosphate. The product spontaneously undergoes cyclization to form 1-pyrroline-5-carboxylate.</text>
</comment>
<comment type="catalytic activity">
    <reaction evidence="1">
        <text>L-glutamate 5-semialdehyde + phosphate + NADP(+) = L-glutamyl 5-phosphate + NADPH + H(+)</text>
        <dbReference type="Rhea" id="RHEA:19541"/>
        <dbReference type="ChEBI" id="CHEBI:15378"/>
        <dbReference type="ChEBI" id="CHEBI:43474"/>
        <dbReference type="ChEBI" id="CHEBI:57783"/>
        <dbReference type="ChEBI" id="CHEBI:58066"/>
        <dbReference type="ChEBI" id="CHEBI:58274"/>
        <dbReference type="ChEBI" id="CHEBI:58349"/>
        <dbReference type="EC" id="1.2.1.41"/>
    </reaction>
</comment>
<comment type="pathway">
    <text evidence="1">Amino-acid biosynthesis; L-proline biosynthesis; L-glutamate 5-semialdehyde from L-glutamate: step 2/2.</text>
</comment>
<comment type="subcellular location">
    <subcellularLocation>
        <location evidence="1">Cytoplasm</location>
    </subcellularLocation>
</comment>
<comment type="similarity">
    <text evidence="1">Belongs to the gamma-glutamyl phosphate reductase family.</text>
</comment>
<dbReference type="EC" id="1.2.1.41" evidence="1"/>
<dbReference type="EMBL" id="AE017126">
    <property type="protein sequence ID" value="AAQ00116.1"/>
    <property type="molecule type" value="Genomic_DNA"/>
</dbReference>
<dbReference type="RefSeq" id="NP_875463.1">
    <property type="nucleotide sequence ID" value="NC_005042.1"/>
</dbReference>
<dbReference type="RefSeq" id="WP_011125223.1">
    <property type="nucleotide sequence ID" value="NC_005042.1"/>
</dbReference>
<dbReference type="SMR" id="Q7VBM1"/>
<dbReference type="STRING" id="167539.Pro_1071"/>
<dbReference type="EnsemblBacteria" id="AAQ00116">
    <property type="protein sequence ID" value="AAQ00116"/>
    <property type="gene ID" value="Pro_1071"/>
</dbReference>
<dbReference type="KEGG" id="pma:Pro_1071"/>
<dbReference type="PATRIC" id="fig|167539.5.peg.1121"/>
<dbReference type="eggNOG" id="COG0014">
    <property type="taxonomic scope" value="Bacteria"/>
</dbReference>
<dbReference type="HOGENOM" id="CLU_030231_0_1_3"/>
<dbReference type="OrthoDB" id="9809970at2"/>
<dbReference type="UniPathway" id="UPA00098">
    <property type="reaction ID" value="UER00360"/>
</dbReference>
<dbReference type="Proteomes" id="UP000001420">
    <property type="component" value="Chromosome"/>
</dbReference>
<dbReference type="GO" id="GO:0005737">
    <property type="term" value="C:cytoplasm"/>
    <property type="evidence" value="ECO:0007669"/>
    <property type="project" value="UniProtKB-SubCell"/>
</dbReference>
<dbReference type="GO" id="GO:0004350">
    <property type="term" value="F:glutamate-5-semialdehyde dehydrogenase activity"/>
    <property type="evidence" value="ECO:0007669"/>
    <property type="project" value="UniProtKB-UniRule"/>
</dbReference>
<dbReference type="GO" id="GO:0050661">
    <property type="term" value="F:NADP binding"/>
    <property type="evidence" value="ECO:0007669"/>
    <property type="project" value="InterPro"/>
</dbReference>
<dbReference type="GO" id="GO:0055129">
    <property type="term" value="P:L-proline biosynthetic process"/>
    <property type="evidence" value="ECO:0007669"/>
    <property type="project" value="UniProtKB-UniRule"/>
</dbReference>
<dbReference type="CDD" id="cd07079">
    <property type="entry name" value="ALDH_F18-19_ProA-GPR"/>
    <property type="match status" value="1"/>
</dbReference>
<dbReference type="FunFam" id="3.40.309.10:FF:000006">
    <property type="entry name" value="Gamma-glutamyl phosphate reductase"/>
    <property type="match status" value="1"/>
</dbReference>
<dbReference type="Gene3D" id="3.40.605.10">
    <property type="entry name" value="Aldehyde Dehydrogenase, Chain A, domain 1"/>
    <property type="match status" value="1"/>
</dbReference>
<dbReference type="Gene3D" id="3.40.309.10">
    <property type="entry name" value="Aldehyde Dehydrogenase, Chain A, domain 2"/>
    <property type="match status" value="1"/>
</dbReference>
<dbReference type="HAMAP" id="MF_00412">
    <property type="entry name" value="ProA"/>
    <property type="match status" value="1"/>
</dbReference>
<dbReference type="InterPro" id="IPR016161">
    <property type="entry name" value="Ald_DH/histidinol_DH"/>
</dbReference>
<dbReference type="InterPro" id="IPR016163">
    <property type="entry name" value="Ald_DH_C"/>
</dbReference>
<dbReference type="InterPro" id="IPR016162">
    <property type="entry name" value="Ald_DH_N"/>
</dbReference>
<dbReference type="InterPro" id="IPR015590">
    <property type="entry name" value="Aldehyde_DH_dom"/>
</dbReference>
<dbReference type="InterPro" id="IPR020593">
    <property type="entry name" value="G-glutamylP_reductase_CS"/>
</dbReference>
<dbReference type="InterPro" id="IPR012134">
    <property type="entry name" value="Glu-5-SA_DH"/>
</dbReference>
<dbReference type="InterPro" id="IPR000965">
    <property type="entry name" value="GPR_dom"/>
</dbReference>
<dbReference type="NCBIfam" id="NF001221">
    <property type="entry name" value="PRK00197.1"/>
    <property type="match status" value="1"/>
</dbReference>
<dbReference type="NCBIfam" id="TIGR00407">
    <property type="entry name" value="proA"/>
    <property type="match status" value="1"/>
</dbReference>
<dbReference type="PANTHER" id="PTHR11063:SF8">
    <property type="entry name" value="DELTA-1-PYRROLINE-5-CARBOXYLATE SYNTHASE"/>
    <property type="match status" value="1"/>
</dbReference>
<dbReference type="PANTHER" id="PTHR11063">
    <property type="entry name" value="GLUTAMATE SEMIALDEHYDE DEHYDROGENASE"/>
    <property type="match status" value="1"/>
</dbReference>
<dbReference type="Pfam" id="PF00171">
    <property type="entry name" value="Aldedh"/>
    <property type="match status" value="1"/>
</dbReference>
<dbReference type="PIRSF" id="PIRSF000151">
    <property type="entry name" value="GPR"/>
    <property type="match status" value="1"/>
</dbReference>
<dbReference type="SUPFAM" id="SSF53720">
    <property type="entry name" value="ALDH-like"/>
    <property type="match status" value="1"/>
</dbReference>
<dbReference type="PROSITE" id="PS01223">
    <property type="entry name" value="PROA"/>
    <property type="match status" value="1"/>
</dbReference>
<gene>
    <name evidence="1" type="primary">proA</name>
    <name type="ordered locus">Pro_1071</name>
</gene>
<proteinExistence type="inferred from homology"/>
<protein>
    <recommendedName>
        <fullName evidence="1">Gamma-glutamyl phosphate reductase</fullName>
        <shortName evidence="1">GPR</shortName>
        <ecNumber evidence="1">1.2.1.41</ecNumber>
    </recommendedName>
    <alternativeName>
        <fullName evidence="1">Glutamate-5-semialdehyde dehydrogenase</fullName>
    </alternativeName>
    <alternativeName>
        <fullName evidence="1">Glutamyl-gamma-semialdehyde dehydrogenase</fullName>
        <shortName evidence="1">GSA dehydrogenase</shortName>
    </alternativeName>
</protein>
<name>PROA_PROMA</name>
<evidence type="ECO:0000255" key="1">
    <source>
        <dbReference type="HAMAP-Rule" id="MF_00412"/>
    </source>
</evidence>
<reference key="1">
    <citation type="journal article" date="2003" name="Proc. Natl. Acad. Sci. U.S.A.">
        <title>Genome sequence of the cyanobacterium Prochlorococcus marinus SS120, a nearly minimal oxyphototrophic genome.</title>
        <authorList>
            <person name="Dufresne A."/>
            <person name="Salanoubat M."/>
            <person name="Partensky F."/>
            <person name="Artiguenave F."/>
            <person name="Axmann I.M."/>
            <person name="Barbe V."/>
            <person name="Duprat S."/>
            <person name="Galperin M.Y."/>
            <person name="Koonin E.V."/>
            <person name="Le Gall F."/>
            <person name="Makarova K.S."/>
            <person name="Ostrowski M."/>
            <person name="Oztas S."/>
            <person name="Robert C."/>
            <person name="Rogozin I.B."/>
            <person name="Scanlan D.J."/>
            <person name="Tandeau de Marsac N."/>
            <person name="Weissenbach J."/>
            <person name="Wincker P."/>
            <person name="Wolf Y.I."/>
            <person name="Hess W.R."/>
        </authorList>
    </citation>
    <scope>NUCLEOTIDE SEQUENCE [LARGE SCALE GENOMIC DNA]</scope>
    <source>
        <strain>SARG / CCMP1375 / SS120</strain>
    </source>
</reference>
<sequence length="436" mass="47709">MEKQILVPSPTDELVNRALEVKSASVSLSQCSNDQRQSALILMTEALSLRSSEILKANSDDVHRAEQEGLNQALLSRLKLTEEKLRISIEGIRQVASLSDPIGIRQLHRELNTNLYLQRVTVPLGVIGVIFESRPDAVMQIASLAIRSGNGAILKGGSEASLTNIEIVKAMKEGLSKSDIQPESICLLKTRQESLGLLGLDGIVDLIIPRGSNELVRFIQDNTRIPVLGHADGICHLYIDSAVNLNQALDIAIDSKCQYPAACNAIETLLLHKDIAASFLKLAIPAFEKLGVTLLGDELSQSFGIITKAEESDWSTEYLDLKLSVKVVSSVDEAMLHIRRYGSRHTDAIATTNKEIARRFLRTVDSSGVYHNCSTRFADGFRYGFGAEVGISTQTLPPRGPVGLDGLVTYRYFLEGDGHIAEDFSNGKKTFSHIDL</sequence>
<organism>
    <name type="scientific">Prochlorococcus marinus (strain SARG / CCMP1375 / SS120)</name>
    <dbReference type="NCBI Taxonomy" id="167539"/>
    <lineage>
        <taxon>Bacteria</taxon>
        <taxon>Bacillati</taxon>
        <taxon>Cyanobacteriota</taxon>
        <taxon>Cyanophyceae</taxon>
        <taxon>Synechococcales</taxon>
        <taxon>Prochlorococcaceae</taxon>
        <taxon>Prochlorococcus</taxon>
    </lineage>
</organism>
<feature type="chain" id="PRO_0000189764" description="Gamma-glutamyl phosphate reductase">
    <location>
        <begin position="1"/>
        <end position="436"/>
    </location>
</feature>